<keyword id="KW-1185">Reference proteome</keyword>
<keyword id="KW-0687">Ribonucleoprotein</keyword>
<keyword id="KW-0689">Ribosomal protein</keyword>
<keyword id="KW-0694">RNA-binding</keyword>
<keyword id="KW-0699">rRNA-binding</keyword>
<feature type="chain" id="PRO_1000122355" description="Large ribosomal subunit protein bL20">
    <location>
        <begin position="1"/>
        <end position="118"/>
    </location>
</feature>
<reference key="1">
    <citation type="journal article" date="2008" name="J. Bacteriol.">
        <title>Complete genome sequence of uropathogenic Proteus mirabilis, a master of both adherence and motility.</title>
        <authorList>
            <person name="Pearson M.M."/>
            <person name="Sebaihia M."/>
            <person name="Churcher C."/>
            <person name="Quail M.A."/>
            <person name="Seshasayee A.S."/>
            <person name="Luscombe N.M."/>
            <person name="Abdellah Z."/>
            <person name="Arrosmith C."/>
            <person name="Atkin B."/>
            <person name="Chillingworth T."/>
            <person name="Hauser H."/>
            <person name="Jagels K."/>
            <person name="Moule S."/>
            <person name="Mungall K."/>
            <person name="Norbertczak H."/>
            <person name="Rabbinowitsch E."/>
            <person name="Walker D."/>
            <person name="Whithead S."/>
            <person name="Thomson N.R."/>
            <person name="Rather P.N."/>
            <person name="Parkhill J."/>
            <person name="Mobley H.L.T."/>
        </authorList>
    </citation>
    <scope>NUCLEOTIDE SEQUENCE [LARGE SCALE GENOMIC DNA]</scope>
    <source>
        <strain>HI4320</strain>
    </source>
</reference>
<sequence length="118" mass="13457">MARAKRGVIARARHKKILKQAKGYYGARSRVYRVAFQAVIKAGQYAYRDRRQKKRQFRQLWIARINAAARQNGMSYSRFINGLRKASIEIDRKILADIAVFDKAAFAALVEKAKGALA</sequence>
<accession>B4ETK9</accession>
<gene>
    <name evidence="1" type="primary">rplT</name>
    <name type="ordered locus">PMI1037</name>
</gene>
<comment type="function">
    <text evidence="1">Binds directly to 23S ribosomal RNA and is necessary for the in vitro assembly process of the 50S ribosomal subunit. It is not involved in the protein synthesizing functions of that subunit.</text>
</comment>
<comment type="similarity">
    <text evidence="1">Belongs to the bacterial ribosomal protein bL20 family.</text>
</comment>
<protein>
    <recommendedName>
        <fullName evidence="1">Large ribosomal subunit protein bL20</fullName>
    </recommendedName>
    <alternativeName>
        <fullName evidence="2">50S ribosomal protein L20</fullName>
    </alternativeName>
</protein>
<evidence type="ECO:0000255" key="1">
    <source>
        <dbReference type="HAMAP-Rule" id="MF_00382"/>
    </source>
</evidence>
<evidence type="ECO:0000305" key="2"/>
<name>RL20_PROMH</name>
<dbReference type="EMBL" id="AM942759">
    <property type="protein sequence ID" value="CAR42260.1"/>
    <property type="molecule type" value="Genomic_DNA"/>
</dbReference>
<dbReference type="RefSeq" id="WP_004242609.1">
    <property type="nucleotide sequence ID" value="NC_010554.1"/>
</dbReference>
<dbReference type="SMR" id="B4ETK9"/>
<dbReference type="EnsemblBacteria" id="CAR42260">
    <property type="protein sequence ID" value="CAR42260"/>
    <property type="gene ID" value="PMI1037"/>
</dbReference>
<dbReference type="GeneID" id="6803549"/>
<dbReference type="KEGG" id="pmr:PMI1037"/>
<dbReference type="eggNOG" id="COG0292">
    <property type="taxonomic scope" value="Bacteria"/>
</dbReference>
<dbReference type="HOGENOM" id="CLU_123265_0_1_6"/>
<dbReference type="Proteomes" id="UP000008319">
    <property type="component" value="Chromosome"/>
</dbReference>
<dbReference type="GO" id="GO:1990904">
    <property type="term" value="C:ribonucleoprotein complex"/>
    <property type="evidence" value="ECO:0007669"/>
    <property type="project" value="UniProtKB-KW"/>
</dbReference>
<dbReference type="GO" id="GO:0005840">
    <property type="term" value="C:ribosome"/>
    <property type="evidence" value="ECO:0007669"/>
    <property type="project" value="UniProtKB-KW"/>
</dbReference>
<dbReference type="GO" id="GO:0019843">
    <property type="term" value="F:rRNA binding"/>
    <property type="evidence" value="ECO:0007669"/>
    <property type="project" value="UniProtKB-UniRule"/>
</dbReference>
<dbReference type="GO" id="GO:0003735">
    <property type="term" value="F:structural constituent of ribosome"/>
    <property type="evidence" value="ECO:0007669"/>
    <property type="project" value="InterPro"/>
</dbReference>
<dbReference type="GO" id="GO:0000027">
    <property type="term" value="P:ribosomal large subunit assembly"/>
    <property type="evidence" value="ECO:0007669"/>
    <property type="project" value="UniProtKB-UniRule"/>
</dbReference>
<dbReference type="GO" id="GO:0006412">
    <property type="term" value="P:translation"/>
    <property type="evidence" value="ECO:0007669"/>
    <property type="project" value="InterPro"/>
</dbReference>
<dbReference type="CDD" id="cd07026">
    <property type="entry name" value="Ribosomal_L20"/>
    <property type="match status" value="1"/>
</dbReference>
<dbReference type="FunFam" id="1.10.1900.20:FF:000001">
    <property type="entry name" value="50S ribosomal protein L20"/>
    <property type="match status" value="1"/>
</dbReference>
<dbReference type="Gene3D" id="6.10.160.10">
    <property type="match status" value="1"/>
</dbReference>
<dbReference type="Gene3D" id="1.10.1900.20">
    <property type="entry name" value="Ribosomal protein L20"/>
    <property type="match status" value="1"/>
</dbReference>
<dbReference type="HAMAP" id="MF_00382">
    <property type="entry name" value="Ribosomal_bL20"/>
    <property type="match status" value="1"/>
</dbReference>
<dbReference type="InterPro" id="IPR005813">
    <property type="entry name" value="Ribosomal_bL20"/>
</dbReference>
<dbReference type="InterPro" id="IPR049946">
    <property type="entry name" value="RIBOSOMAL_L20_CS"/>
</dbReference>
<dbReference type="InterPro" id="IPR035566">
    <property type="entry name" value="Ribosomal_protein_bL20_C"/>
</dbReference>
<dbReference type="NCBIfam" id="TIGR01032">
    <property type="entry name" value="rplT_bact"/>
    <property type="match status" value="1"/>
</dbReference>
<dbReference type="PANTHER" id="PTHR10986">
    <property type="entry name" value="39S RIBOSOMAL PROTEIN L20"/>
    <property type="match status" value="1"/>
</dbReference>
<dbReference type="Pfam" id="PF00453">
    <property type="entry name" value="Ribosomal_L20"/>
    <property type="match status" value="1"/>
</dbReference>
<dbReference type="PRINTS" id="PR00062">
    <property type="entry name" value="RIBOSOMALL20"/>
</dbReference>
<dbReference type="SUPFAM" id="SSF74731">
    <property type="entry name" value="Ribosomal protein L20"/>
    <property type="match status" value="1"/>
</dbReference>
<dbReference type="PROSITE" id="PS00937">
    <property type="entry name" value="RIBOSOMAL_L20"/>
    <property type="match status" value="1"/>
</dbReference>
<proteinExistence type="inferred from homology"/>
<organism>
    <name type="scientific">Proteus mirabilis (strain HI4320)</name>
    <dbReference type="NCBI Taxonomy" id="529507"/>
    <lineage>
        <taxon>Bacteria</taxon>
        <taxon>Pseudomonadati</taxon>
        <taxon>Pseudomonadota</taxon>
        <taxon>Gammaproteobacteria</taxon>
        <taxon>Enterobacterales</taxon>
        <taxon>Morganellaceae</taxon>
        <taxon>Proteus</taxon>
    </lineage>
</organism>